<feature type="chain" id="PRO_1000022056" description="Isoleucine--tRNA ligase">
    <location>
        <begin position="1"/>
        <end position="925"/>
    </location>
</feature>
<feature type="short sequence motif" description="'HIGH' region">
    <location>
        <begin position="57"/>
        <end position="67"/>
    </location>
</feature>
<feature type="short sequence motif" description="'KMSKS' region">
    <location>
        <begin position="597"/>
        <end position="601"/>
    </location>
</feature>
<feature type="binding site" evidence="1">
    <location>
        <position position="556"/>
    </location>
    <ligand>
        <name>L-isoleucyl-5'-AMP</name>
        <dbReference type="ChEBI" id="CHEBI:178002"/>
    </ligand>
</feature>
<feature type="binding site" evidence="1">
    <location>
        <position position="600"/>
    </location>
    <ligand>
        <name>ATP</name>
        <dbReference type="ChEBI" id="CHEBI:30616"/>
    </ligand>
</feature>
<feature type="binding site" evidence="1">
    <location>
        <position position="890"/>
    </location>
    <ligand>
        <name>Zn(2+)</name>
        <dbReference type="ChEBI" id="CHEBI:29105"/>
    </ligand>
</feature>
<feature type="binding site" evidence="1">
    <location>
        <position position="893"/>
    </location>
    <ligand>
        <name>Zn(2+)</name>
        <dbReference type="ChEBI" id="CHEBI:29105"/>
    </ligand>
</feature>
<feature type="binding site" evidence="1">
    <location>
        <position position="910"/>
    </location>
    <ligand>
        <name>Zn(2+)</name>
        <dbReference type="ChEBI" id="CHEBI:29105"/>
    </ligand>
</feature>
<feature type="binding site" evidence="1">
    <location>
        <position position="913"/>
    </location>
    <ligand>
        <name>Zn(2+)</name>
        <dbReference type="ChEBI" id="CHEBI:29105"/>
    </ligand>
</feature>
<name>SYI_CARHZ</name>
<dbReference type="EC" id="6.1.1.5" evidence="1"/>
<dbReference type="EMBL" id="CP000141">
    <property type="protein sequence ID" value="ABB14741.1"/>
    <property type="molecule type" value="Genomic_DNA"/>
</dbReference>
<dbReference type="RefSeq" id="WP_011343468.1">
    <property type="nucleotide sequence ID" value="NC_007503.1"/>
</dbReference>
<dbReference type="SMR" id="Q3AEP2"/>
<dbReference type="FunCoup" id="Q3AEP2">
    <property type="interactions" value="429"/>
</dbReference>
<dbReference type="STRING" id="246194.CHY_0534"/>
<dbReference type="KEGG" id="chy:CHY_0534"/>
<dbReference type="eggNOG" id="COG0060">
    <property type="taxonomic scope" value="Bacteria"/>
</dbReference>
<dbReference type="HOGENOM" id="CLU_001493_7_0_9"/>
<dbReference type="InParanoid" id="Q3AEP2"/>
<dbReference type="OrthoDB" id="9810365at2"/>
<dbReference type="Proteomes" id="UP000002706">
    <property type="component" value="Chromosome"/>
</dbReference>
<dbReference type="GO" id="GO:0005829">
    <property type="term" value="C:cytosol"/>
    <property type="evidence" value="ECO:0007669"/>
    <property type="project" value="TreeGrafter"/>
</dbReference>
<dbReference type="GO" id="GO:0002161">
    <property type="term" value="F:aminoacyl-tRNA deacylase activity"/>
    <property type="evidence" value="ECO:0007669"/>
    <property type="project" value="InterPro"/>
</dbReference>
<dbReference type="GO" id="GO:0005524">
    <property type="term" value="F:ATP binding"/>
    <property type="evidence" value="ECO:0007669"/>
    <property type="project" value="UniProtKB-UniRule"/>
</dbReference>
<dbReference type="GO" id="GO:0004822">
    <property type="term" value="F:isoleucine-tRNA ligase activity"/>
    <property type="evidence" value="ECO:0007669"/>
    <property type="project" value="UniProtKB-UniRule"/>
</dbReference>
<dbReference type="GO" id="GO:0000049">
    <property type="term" value="F:tRNA binding"/>
    <property type="evidence" value="ECO:0007669"/>
    <property type="project" value="InterPro"/>
</dbReference>
<dbReference type="GO" id="GO:0008270">
    <property type="term" value="F:zinc ion binding"/>
    <property type="evidence" value="ECO:0007669"/>
    <property type="project" value="UniProtKB-UniRule"/>
</dbReference>
<dbReference type="GO" id="GO:0006428">
    <property type="term" value="P:isoleucyl-tRNA aminoacylation"/>
    <property type="evidence" value="ECO:0007669"/>
    <property type="project" value="UniProtKB-UniRule"/>
</dbReference>
<dbReference type="CDD" id="cd07960">
    <property type="entry name" value="Anticodon_Ia_Ile_BEm"/>
    <property type="match status" value="1"/>
</dbReference>
<dbReference type="CDD" id="cd00818">
    <property type="entry name" value="IleRS_core"/>
    <property type="match status" value="1"/>
</dbReference>
<dbReference type="FunFam" id="1.10.730.20:FF:000001">
    <property type="entry name" value="Isoleucine--tRNA ligase"/>
    <property type="match status" value="1"/>
</dbReference>
<dbReference type="FunFam" id="3.40.50.620:FF:000152">
    <property type="entry name" value="Isoleucine--tRNA ligase"/>
    <property type="match status" value="1"/>
</dbReference>
<dbReference type="Gene3D" id="1.10.730.20">
    <property type="match status" value="1"/>
</dbReference>
<dbReference type="Gene3D" id="3.40.50.620">
    <property type="entry name" value="HUPs"/>
    <property type="match status" value="2"/>
</dbReference>
<dbReference type="Gene3D" id="3.90.740.10">
    <property type="entry name" value="Valyl/Leucyl/Isoleucyl-tRNA synthetase, editing domain"/>
    <property type="match status" value="1"/>
</dbReference>
<dbReference type="HAMAP" id="MF_02002">
    <property type="entry name" value="Ile_tRNA_synth_type1"/>
    <property type="match status" value="1"/>
</dbReference>
<dbReference type="InterPro" id="IPR001412">
    <property type="entry name" value="aa-tRNA-synth_I_CS"/>
</dbReference>
<dbReference type="InterPro" id="IPR002300">
    <property type="entry name" value="aa-tRNA-synth_Ia"/>
</dbReference>
<dbReference type="InterPro" id="IPR033708">
    <property type="entry name" value="Anticodon_Ile_BEm"/>
</dbReference>
<dbReference type="InterPro" id="IPR002301">
    <property type="entry name" value="Ile-tRNA-ligase"/>
</dbReference>
<dbReference type="InterPro" id="IPR023585">
    <property type="entry name" value="Ile-tRNA-ligase_type1"/>
</dbReference>
<dbReference type="InterPro" id="IPR050081">
    <property type="entry name" value="Ile-tRNA_ligase"/>
</dbReference>
<dbReference type="InterPro" id="IPR013155">
    <property type="entry name" value="M/V/L/I-tRNA-synth_anticd-bd"/>
</dbReference>
<dbReference type="InterPro" id="IPR014729">
    <property type="entry name" value="Rossmann-like_a/b/a_fold"/>
</dbReference>
<dbReference type="InterPro" id="IPR009080">
    <property type="entry name" value="tRNAsynth_Ia_anticodon-bd"/>
</dbReference>
<dbReference type="InterPro" id="IPR009008">
    <property type="entry name" value="Val/Leu/Ile-tRNA-synth_edit"/>
</dbReference>
<dbReference type="InterPro" id="IPR010663">
    <property type="entry name" value="Znf_FPG/IleRS"/>
</dbReference>
<dbReference type="NCBIfam" id="TIGR00392">
    <property type="entry name" value="ileS"/>
    <property type="match status" value="1"/>
</dbReference>
<dbReference type="PANTHER" id="PTHR42765:SF1">
    <property type="entry name" value="ISOLEUCINE--TRNA LIGASE, MITOCHONDRIAL"/>
    <property type="match status" value="1"/>
</dbReference>
<dbReference type="PANTHER" id="PTHR42765">
    <property type="entry name" value="SOLEUCYL-TRNA SYNTHETASE"/>
    <property type="match status" value="1"/>
</dbReference>
<dbReference type="Pfam" id="PF08264">
    <property type="entry name" value="Anticodon_1"/>
    <property type="match status" value="1"/>
</dbReference>
<dbReference type="Pfam" id="PF00133">
    <property type="entry name" value="tRNA-synt_1"/>
    <property type="match status" value="1"/>
</dbReference>
<dbReference type="Pfam" id="PF06827">
    <property type="entry name" value="zf-FPG_IleRS"/>
    <property type="match status" value="1"/>
</dbReference>
<dbReference type="PRINTS" id="PR00984">
    <property type="entry name" value="TRNASYNTHILE"/>
</dbReference>
<dbReference type="SUPFAM" id="SSF47323">
    <property type="entry name" value="Anticodon-binding domain of a subclass of class I aminoacyl-tRNA synthetases"/>
    <property type="match status" value="1"/>
</dbReference>
<dbReference type="SUPFAM" id="SSF52374">
    <property type="entry name" value="Nucleotidylyl transferase"/>
    <property type="match status" value="1"/>
</dbReference>
<dbReference type="SUPFAM" id="SSF50677">
    <property type="entry name" value="ValRS/IleRS/LeuRS editing domain"/>
    <property type="match status" value="1"/>
</dbReference>
<dbReference type="PROSITE" id="PS00178">
    <property type="entry name" value="AA_TRNA_LIGASE_I"/>
    <property type="match status" value="1"/>
</dbReference>
<keyword id="KW-0030">Aminoacyl-tRNA synthetase</keyword>
<keyword id="KW-0067">ATP-binding</keyword>
<keyword id="KW-0963">Cytoplasm</keyword>
<keyword id="KW-0436">Ligase</keyword>
<keyword id="KW-0479">Metal-binding</keyword>
<keyword id="KW-0547">Nucleotide-binding</keyword>
<keyword id="KW-0648">Protein biosynthesis</keyword>
<keyword id="KW-1185">Reference proteome</keyword>
<keyword id="KW-0862">Zinc</keyword>
<organism>
    <name type="scientific">Carboxydothermus hydrogenoformans (strain ATCC BAA-161 / DSM 6008 / Z-2901)</name>
    <dbReference type="NCBI Taxonomy" id="246194"/>
    <lineage>
        <taxon>Bacteria</taxon>
        <taxon>Bacillati</taxon>
        <taxon>Bacillota</taxon>
        <taxon>Clostridia</taxon>
        <taxon>Thermoanaerobacterales</taxon>
        <taxon>Thermoanaerobacteraceae</taxon>
        <taxon>Carboxydothermus</taxon>
    </lineage>
</organism>
<sequence>MDYGKTLNLPVTDFPMRGNLPEREPEILAYWQKIDLYRKVQQKNEGRPKFILHDGPPYANGDIHMGHVLNKVLKDMIVKFKSMDGYDAPYVPGWDTHGLPIEQRAIKDLGINRKEISPLEFRAKCREYAEKYARIQKEQFKRLGVRGDWENPYLTLMPHYEAKQIEIFGEMAKKGYIYKGLKPVYWCPVCETALAEAEIEYAEKKSPSIYVRFKVVEGKGKVPEDAYLVIWTTTPWTLPANVAIAVHPEFTYALVKTEKGDYVVAEGLVQQFFEATKLTGEIVARFKGEELLGVVTRHPFIERESPVVLADYVTLESGTGLVHTAPGHGTEDFETGKKYNLPVLSPVNHQGVFTEGAGKYAGMKIDDGNKAITQDLEASGDLLAMSFIKHSYPHCWRCKNPVIFRATEQWFASIDGFREQALKEIEKVEWIPAWGKDRIYNMVRDRGDWCISRQRTWGVPIPIFYCEACGKEIITDESIKAVSDLFRVEGSDAWWKYEAGEILPDGFRCPHCGGVKFRKETDIMDVWFDSGSSHAAVLEQPEYWPDLRWPADLYLEGSDQHRGWFNSSLSTAVATRGMAPYKAVLTHGFLVDEKGRKMSKSLGNVVDPLKVIKELGADILRLWVASADYRSDLAISNNILKQTAEGYRKIRNTIRFLLGNLYDYDHEKHRVPYERLLEIDRWALAKLHRLIARVVRAYRDYEFHVVFHAVHNFCTVDMSAIYLDIIKDRLYVELPDSEKRRSAQTVLYEILDSLLRLLTPILAFTTEEAYRHFPAKGKKESVQLLDMPKVEERYLDLTLEETWDKILEVRAKVLKALEIARQEKLIGHSLDAWVTLKASGELYDFLVERVNMWPEIFIVSQVDIQNEEVTGENGELPLEVVVNKALGEKCQRCWMYSPEVGLDPEFPDTCPRCAGVLHELKNRPL</sequence>
<reference key="1">
    <citation type="journal article" date="2005" name="PLoS Genet.">
        <title>Life in hot carbon monoxide: the complete genome sequence of Carboxydothermus hydrogenoformans Z-2901.</title>
        <authorList>
            <person name="Wu M."/>
            <person name="Ren Q."/>
            <person name="Durkin A.S."/>
            <person name="Daugherty S.C."/>
            <person name="Brinkac L.M."/>
            <person name="Dodson R.J."/>
            <person name="Madupu R."/>
            <person name="Sullivan S.A."/>
            <person name="Kolonay J.F."/>
            <person name="Nelson W.C."/>
            <person name="Tallon L.J."/>
            <person name="Jones K.M."/>
            <person name="Ulrich L.E."/>
            <person name="Gonzalez J.M."/>
            <person name="Zhulin I.B."/>
            <person name="Robb F.T."/>
            <person name="Eisen J.A."/>
        </authorList>
    </citation>
    <scope>NUCLEOTIDE SEQUENCE [LARGE SCALE GENOMIC DNA]</scope>
    <source>
        <strain>ATCC BAA-161 / DSM 6008 / Z-2901</strain>
    </source>
</reference>
<evidence type="ECO:0000255" key="1">
    <source>
        <dbReference type="HAMAP-Rule" id="MF_02002"/>
    </source>
</evidence>
<gene>
    <name evidence="1" type="primary">ileS</name>
    <name type="ordered locus">CHY_0534</name>
</gene>
<comment type="function">
    <text evidence="1">Catalyzes the attachment of isoleucine to tRNA(Ile). As IleRS can inadvertently accommodate and process structurally similar amino acids such as valine, to avoid such errors it has two additional distinct tRNA(Ile)-dependent editing activities. One activity is designated as 'pretransfer' editing and involves the hydrolysis of activated Val-AMP. The other activity is designated 'posttransfer' editing and involves deacylation of mischarged Val-tRNA(Ile).</text>
</comment>
<comment type="catalytic activity">
    <reaction evidence="1">
        <text>tRNA(Ile) + L-isoleucine + ATP = L-isoleucyl-tRNA(Ile) + AMP + diphosphate</text>
        <dbReference type="Rhea" id="RHEA:11060"/>
        <dbReference type="Rhea" id="RHEA-COMP:9666"/>
        <dbReference type="Rhea" id="RHEA-COMP:9695"/>
        <dbReference type="ChEBI" id="CHEBI:30616"/>
        <dbReference type="ChEBI" id="CHEBI:33019"/>
        <dbReference type="ChEBI" id="CHEBI:58045"/>
        <dbReference type="ChEBI" id="CHEBI:78442"/>
        <dbReference type="ChEBI" id="CHEBI:78528"/>
        <dbReference type="ChEBI" id="CHEBI:456215"/>
        <dbReference type="EC" id="6.1.1.5"/>
    </reaction>
</comment>
<comment type="cofactor">
    <cofactor evidence="1">
        <name>Zn(2+)</name>
        <dbReference type="ChEBI" id="CHEBI:29105"/>
    </cofactor>
    <text evidence="1">Binds 1 zinc ion per subunit.</text>
</comment>
<comment type="subunit">
    <text evidence="1">Monomer.</text>
</comment>
<comment type="subcellular location">
    <subcellularLocation>
        <location evidence="1">Cytoplasm</location>
    </subcellularLocation>
</comment>
<comment type="domain">
    <text evidence="1">IleRS has two distinct active sites: one for aminoacylation and one for editing. The misactivated valine is translocated from the active site to the editing site, which sterically excludes the correctly activated isoleucine. The single editing site contains two valyl binding pockets, one specific for each substrate (Val-AMP or Val-tRNA(Ile)).</text>
</comment>
<comment type="similarity">
    <text evidence="1">Belongs to the class-I aminoacyl-tRNA synthetase family. IleS type 1 subfamily.</text>
</comment>
<proteinExistence type="inferred from homology"/>
<accession>Q3AEP2</accession>
<protein>
    <recommendedName>
        <fullName evidence="1">Isoleucine--tRNA ligase</fullName>
        <ecNumber evidence="1">6.1.1.5</ecNumber>
    </recommendedName>
    <alternativeName>
        <fullName evidence="1">Isoleucyl-tRNA synthetase</fullName>
        <shortName evidence="1">IleRS</shortName>
    </alternativeName>
</protein>